<proteinExistence type="inferred from homology"/>
<reference key="1">
    <citation type="journal article" date="2007" name="PLoS ONE">
        <title>Analysis of the neurotoxin complex genes in Clostridium botulinum A1-A4 and B1 strains: BoNT/A3, /Ba4 and /B1 clusters are located within plasmids.</title>
        <authorList>
            <person name="Smith T.J."/>
            <person name="Hill K.K."/>
            <person name="Foley B.T."/>
            <person name="Detter J.C."/>
            <person name="Munk A.C."/>
            <person name="Bruce D.C."/>
            <person name="Doggett N.A."/>
            <person name="Smith L.A."/>
            <person name="Marks J.D."/>
            <person name="Xie G."/>
            <person name="Brettin T.S."/>
        </authorList>
    </citation>
    <scope>NUCLEOTIDE SEQUENCE [LARGE SCALE GENOMIC DNA]</scope>
    <source>
        <strain>Loch Maree / Type A3</strain>
    </source>
</reference>
<gene>
    <name type="ordered locus">CLK_0815</name>
</gene>
<dbReference type="EMBL" id="CP000962">
    <property type="protein sequence ID" value="ACA55034.1"/>
    <property type="molecule type" value="Genomic_DNA"/>
</dbReference>
<dbReference type="RefSeq" id="WP_012343063.1">
    <property type="nucleotide sequence ID" value="NC_010520.1"/>
</dbReference>
<dbReference type="KEGG" id="cbl:CLK_0815"/>
<dbReference type="HOGENOM" id="CLU_094511_0_1_9"/>
<dbReference type="HAMAP" id="MF_00674">
    <property type="entry name" value="UPF0251"/>
    <property type="match status" value="1"/>
</dbReference>
<dbReference type="InterPro" id="IPR013324">
    <property type="entry name" value="RNA_pol_sigma_r3/r4-like"/>
</dbReference>
<dbReference type="InterPro" id="IPR002852">
    <property type="entry name" value="UPF0251"/>
</dbReference>
<dbReference type="PANTHER" id="PTHR37478">
    <property type="match status" value="1"/>
</dbReference>
<dbReference type="PANTHER" id="PTHR37478:SF2">
    <property type="entry name" value="UPF0251 PROTEIN TK0562"/>
    <property type="match status" value="1"/>
</dbReference>
<dbReference type="Pfam" id="PF02001">
    <property type="entry name" value="DUF134"/>
    <property type="match status" value="1"/>
</dbReference>
<dbReference type="SUPFAM" id="SSF88659">
    <property type="entry name" value="Sigma3 and sigma4 domains of RNA polymerase sigma factors"/>
    <property type="match status" value="1"/>
</dbReference>
<organism>
    <name type="scientific">Clostridium botulinum (strain Loch Maree / Type A3)</name>
    <dbReference type="NCBI Taxonomy" id="498214"/>
    <lineage>
        <taxon>Bacteria</taxon>
        <taxon>Bacillati</taxon>
        <taxon>Bacillota</taxon>
        <taxon>Clostridia</taxon>
        <taxon>Eubacteriales</taxon>
        <taxon>Clostridiaceae</taxon>
        <taxon>Clostridium</taxon>
    </lineage>
</organism>
<sequence length="157" mass="18528">MPRPTKFRRVEFFPENNYFVPWGKPKCEMHEVVLKVEELEAMRLKDIEELNQEQCAEKMEISRQTFQNIIDSARKKVAIALTEGKAIKISGGHYTTKLCKLKCIDCGEIYEINYEQDRHLCPNCGSEKVICNKKADFCRRWCKGQNRKEQYEESKNK</sequence>
<feature type="chain" id="PRO_1000131578" description="UPF0251 protein CLK_0815">
    <location>
        <begin position="1"/>
        <end position="157"/>
    </location>
</feature>
<protein>
    <recommendedName>
        <fullName evidence="1">UPF0251 protein CLK_0815</fullName>
    </recommendedName>
</protein>
<evidence type="ECO:0000255" key="1">
    <source>
        <dbReference type="HAMAP-Rule" id="MF_00674"/>
    </source>
</evidence>
<comment type="similarity">
    <text evidence="1">Belongs to the UPF0251 family.</text>
</comment>
<name>Y815_CLOBM</name>
<accession>B1L0J7</accession>